<sequence length="533" mass="57931">MSNLKWRALLVVVVLIVGVVYLVPTFVSTLPPGWSKFLPKDKIRLGLDLQGGMHLILEVEADQAVSNTATRLAEDLKDAFRKEKIAFNKIDKTGKWDIEVQLPGTEQQSQIGPLVEKEFPTLKWVSAETQPEGTVKVMLTVHEKEVERVQKAAIAQGLETIRNRIDQFGVSEPDIRPQGEDRILVQLPGIQDPQRAVELIGKTAQLEFKLVAEGVSPQDVKSGKAPAGTKIYPMKHTDRTTRQRTESQIVLNDRTLMSGEYITNAQVEIDRQHSSSYVALDFDAQGAKLFEKITEANVKKQLAIVLDGVVYSAPVIQETIGGGKATITGSFTDQEARDLAIVLRAGALPAPVKILEQRTVGPSLGADSINKGVLASIVGGIGTILFMLIYYRFGGVVADLALALNVLLVLAGMAAFGFTLTLPGIAGIALTIGMAVDANVLIYERIREELRLGKTPRAALETGYDRATLTILDANVTTIIAALVLLQFGTGPVRGFAVTLTVGLAANMFTAIFVTRVIFDYLLVQRRIKTLSI</sequence>
<name>SECD_SYNFM</name>
<evidence type="ECO:0000255" key="1">
    <source>
        <dbReference type="HAMAP-Rule" id="MF_01463"/>
    </source>
</evidence>
<proteinExistence type="inferred from homology"/>
<feature type="chain" id="PRO_5000166173" description="Protein translocase subunit SecD">
    <location>
        <begin position="1"/>
        <end position="533"/>
    </location>
</feature>
<feature type="transmembrane region" description="Helical" evidence="1">
    <location>
        <begin position="8"/>
        <end position="28"/>
    </location>
</feature>
<feature type="transmembrane region" description="Helical" evidence="1">
    <location>
        <begin position="377"/>
        <end position="397"/>
    </location>
</feature>
<feature type="transmembrane region" description="Helical" evidence="1">
    <location>
        <begin position="400"/>
        <end position="420"/>
    </location>
</feature>
<feature type="transmembrane region" description="Helical" evidence="1">
    <location>
        <begin position="422"/>
        <end position="442"/>
    </location>
</feature>
<feature type="transmembrane region" description="Helical" evidence="1">
    <location>
        <begin position="469"/>
        <end position="489"/>
    </location>
</feature>
<feature type="transmembrane region" description="Helical" evidence="1">
    <location>
        <begin position="495"/>
        <end position="515"/>
    </location>
</feature>
<keyword id="KW-0997">Cell inner membrane</keyword>
<keyword id="KW-1003">Cell membrane</keyword>
<keyword id="KW-0472">Membrane</keyword>
<keyword id="KW-0653">Protein transport</keyword>
<keyword id="KW-1185">Reference proteome</keyword>
<keyword id="KW-0811">Translocation</keyword>
<keyword id="KW-0812">Transmembrane</keyword>
<keyword id="KW-1133">Transmembrane helix</keyword>
<keyword id="KW-0813">Transport</keyword>
<organism>
    <name type="scientific">Syntrophobacter fumaroxidans (strain DSM 10017 / MPOB)</name>
    <dbReference type="NCBI Taxonomy" id="335543"/>
    <lineage>
        <taxon>Bacteria</taxon>
        <taxon>Pseudomonadati</taxon>
        <taxon>Thermodesulfobacteriota</taxon>
        <taxon>Syntrophobacteria</taxon>
        <taxon>Syntrophobacterales</taxon>
        <taxon>Syntrophobacteraceae</taxon>
        <taxon>Syntrophobacter</taxon>
    </lineage>
</organism>
<accession>A0LHM9</accession>
<dbReference type="EMBL" id="CP000478">
    <property type="protein sequence ID" value="ABK16931.1"/>
    <property type="molecule type" value="Genomic_DNA"/>
</dbReference>
<dbReference type="RefSeq" id="WP_011698102.1">
    <property type="nucleotide sequence ID" value="NC_008554.1"/>
</dbReference>
<dbReference type="SMR" id="A0LHM9"/>
<dbReference type="FunCoup" id="A0LHM9">
    <property type="interactions" value="349"/>
</dbReference>
<dbReference type="STRING" id="335543.Sfum_1239"/>
<dbReference type="KEGG" id="sfu:Sfum_1239"/>
<dbReference type="eggNOG" id="COG0342">
    <property type="taxonomic scope" value="Bacteria"/>
</dbReference>
<dbReference type="HOGENOM" id="CLU_007894_4_3_7"/>
<dbReference type="InParanoid" id="A0LHM9"/>
<dbReference type="OrthoDB" id="9805019at2"/>
<dbReference type="Proteomes" id="UP000001784">
    <property type="component" value="Chromosome"/>
</dbReference>
<dbReference type="GO" id="GO:0005886">
    <property type="term" value="C:plasma membrane"/>
    <property type="evidence" value="ECO:0007669"/>
    <property type="project" value="UniProtKB-SubCell"/>
</dbReference>
<dbReference type="GO" id="GO:0015450">
    <property type="term" value="F:protein-transporting ATPase activity"/>
    <property type="evidence" value="ECO:0007669"/>
    <property type="project" value="InterPro"/>
</dbReference>
<dbReference type="GO" id="GO:0065002">
    <property type="term" value="P:intracellular protein transmembrane transport"/>
    <property type="evidence" value="ECO:0007669"/>
    <property type="project" value="UniProtKB-UniRule"/>
</dbReference>
<dbReference type="GO" id="GO:0006605">
    <property type="term" value="P:protein targeting"/>
    <property type="evidence" value="ECO:0007669"/>
    <property type="project" value="UniProtKB-UniRule"/>
</dbReference>
<dbReference type="GO" id="GO:0043952">
    <property type="term" value="P:protein transport by the Sec complex"/>
    <property type="evidence" value="ECO:0007669"/>
    <property type="project" value="UniProtKB-UniRule"/>
</dbReference>
<dbReference type="FunFam" id="3.30.1360.200:FF:000002">
    <property type="entry name" value="Preprotein translocase subunit SecD"/>
    <property type="match status" value="1"/>
</dbReference>
<dbReference type="FunFam" id="1.20.1640.10:FF:000004">
    <property type="entry name" value="Protein translocase subunit SecD"/>
    <property type="match status" value="1"/>
</dbReference>
<dbReference type="Gene3D" id="3.30.1360.200">
    <property type="match status" value="1"/>
</dbReference>
<dbReference type="Gene3D" id="3.30.70.3400">
    <property type="match status" value="2"/>
</dbReference>
<dbReference type="Gene3D" id="1.20.1640.10">
    <property type="entry name" value="Multidrug efflux transporter AcrB transmembrane domain"/>
    <property type="match status" value="1"/>
</dbReference>
<dbReference type="HAMAP" id="MF_01463_B">
    <property type="entry name" value="SecD_B"/>
    <property type="match status" value="1"/>
</dbReference>
<dbReference type="InterPro" id="IPR005791">
    <property type="entry name" value="SecD"/>
</dbReference>
<dbReference type="InterPro" id="IPR022813">
    <property type="entry name" value="SecD/SecF_arch_bac"/>
</dbReference>
<dbReference type="InterPro" id="IPR048631">
    <property type="entry name" value="SecD_1st"/>
</dbReference>
<dbReference type="InterPro" id="IPR048634">
    <property type="entry name" value="SecD_SecF_C"/>
</dbReference>
<dbReference type="InterPro" id="IPR055344">
    <property type="entry name" value="SecD_SecF_C_bact"/>
</dbReference>
<dbReference type="InterPro" id="IPR054384">
    <property type="entry name" value="SecDF_P1_head"/>
</dbReference>
<dbReference type="NCBIfam" id="TIGR00916">
    <property type="entry name" value="2A0604s01"/>
    <property type="match status" value="1"/>
</dbReference>
<dbReference type="NCBIfam" id="TIGR01129">
    <property type="entry name" value="secD"/>
    <property type="match status" value="1"/>
</dbReference>
<dbReference type="PANTHER" id="PTHR30081:SF1">
    <property type="entry name" value="PROTEIN TRANSLOCASE SUBUNIT SECD"/>
    <property type="match status" value="1"/>
</dbReference>
<dbReference type="PANTHER" id="PTHR30081">
    <property type="entry name" value="PROTEIN-EXPORT MEMBRANE PROTEIN SEC"/>
    <property type="match status" value="1"/>
</dbReference>
<dbReference type="Pfam" id="PF21760">
    <property type="entry name" value="SecD_1st"/>
    <property type="match status" value="1"/>
</dbReference>
<dbReference type="Pfam" id="PF02355">
    <property type="entry name" value="SecD_SecF_C"/>
    <property type="match status" value="1"/>
</dbReference>
<dbReference type="Pfam" id="PF22599">
    <property type="entry name" value="SecDF_P1_head"/>
    <property type="match status" value="1"/>
</dbReference>
<dbReference type="SUPFAM" id="SSF82866">
    <property type="entry name" value="Multidrug efflux transporter AcrB transmembrane domain"/>
    <property type="match status" value="1"/>
</dbReference>
<comment type="function">
    <text evidence="1">Part of the Sec protein translocase complex. Interacts with the SecYEG preprotein conducting channel. SecDF uses the proton motive force (PMF) to complete protein translocation after the ATP-dependent function of SecA.</text>
</comment>
<comment type="subunit">
    <text evidence="1">Forms a complex with SecF. Part of the essential Sec protein translocation apparatus which comprises SecA, SecYEG and auxiliary proteins SecDF-YajC and YidC.</text>
</comment>
<comment type="subcellular location">
    <subcellularLocation>
        <location evidence="1">Cell inner membrane</location>
        <topology evidence="1">Multi-pass membrane protein</topology>
    </subcellularLocation>
</comment>
<comment type="similarity">
    <text evidence="1">Belongs to the SecD/SecF family. SecD subfamily.</text>
</comment>
<reference key="1">
    <citation type="submission" date="2006-10" db="EMBL/GenBank/DDBJ databases">
        <title>Complete sequence of Syntrophobacter fumaroxidans MPOB.</title>
        <authorList>
            <consortium name="US DOE Joint Genome Institute"/>
            <person name="Copeland A."/>
            <person name="Lucas S."/>
            <person name="Lapidus A."/>
            <person name="Barry K."/>
            <person name="Detter J.C."/>
            <person name="Glavina del Rio T."/>
            <person name="Hammon N."/>
            <person name="Israni S."/>
            <person name="Pitluck S."/>
            <person name="Goltsman E.G."/>
            <person name="Martinez M."/>
            <person name="Schmutz J."/>
            <person name="Larimer F."/>
            <person name="Land M."/>
            <person name="Hauser L."/>
            <person name="Kyrpides N."/>
            <person name="Kim E."/>
            <person name="Boone D.R."/>
            <person name="Brockman F."/>
            <person name="Culley D."/>
            <person name="Ferry J."/>
            <person name="Gunsalus R."/>
            <person name="McInerney M.J."/>
            <person name="Morrison M."/>
            <person name="Plugge C."/>
            <person name="Rohlin L."/>
            <person name="Scholten J."/>
            <person name="Sieber J."/>
            <person name="Stams A.J.M."/>
            <person name="Worm P."/>
            <person name="Henstra A.M."/>
            <person name="Richardson P."/>
        </authorList>
    </citation>
    <scope>NUCLEOTIDE SEQUENCE [LARGE SCALE GENOMIC DNA]</scope>
    <source>
        <strain>DSM 10017 / MPOB</strain>
    </source>
</reference>
<protein>
    <recommendedName>
        <fullName evidence="1">Protein translocase subunit SecD</fullName>
    </recommendedName>
</protein>
<gene>
    <name evidence="1" type="primary">secD</name>
    <name type="ordered locus">Sfum_1239</name>
</gene>